<protein>
    <recommendedName>
        <fullName evidence="10">Transcription factor ATOH7</fullName>
    </recommendedName>
    <alternativeName>
        <fullName evidence="11">Atonal bHLH transcription factor 7</fullName>
    </alternativeName>
    <alternativeName>
        <fullName evidence="11">Class A basic helix-loop-helix protein 13</fullName>
        <shortName evidence="11">bHLHa13</shortName>
    </alternativeName>
    <alternativeName>
        <fullName evidence="11">Protein atonal homolog 7</fullName>
    </alternativeName>
</protein>
<reference key="1">
    <citation type="journal article" date="2002" name="Mamm. Genome">
        <title>Molecular characterization and mapping of ATOH7, a human atonal homolog with a predicted role in retinal ganglion cell development.</title>
        <authorList>
            <person name="Brown N.L."/>
            <person name="Dagenais S.L."/>
            <person name="Chen C.-M."/>
            <person name="Glaser T."/>
        </authorList>
    </citation>
    <scope>NUCLEOTIDE SEQUENCE [GENOMIC DNA]</scope>
</reference>
<reference key="2">
    <citation type="journal article" date="2004" name="Genome Res.">
        <title>The status, quality, and expansion of the NIH full-length cDNA project: the Mammalian Gene Collection (MGC).</title>
        <authorList>
            <consortium name="The MGC Project Team"/>
        </authorList>
    </citation>
    <scope>NUCLEOTIDE SEQUENCE [LARGE SCALE MRNA]</scope>
    <source>
        <tissue>Eye</tissue>
    </source>
</reference>
<reference key="3">
    <citation type="journal article" date="2002" name="Mech. Dev.">
        <title>Exhaustive identification of human class II basic helix-loop-helix proteins by virtual library screening.</title>
        <authorList>
            <person name="McLellan A.S."/>
            <person name="Langlands K."/>
            <person name="Kealey T."/>
        </authorList>
    </citation>
    <scope>IDENTIFICATION</scope>
</reference>
<reference key="4">
    <citation type="journal article" date="2011" name="Nat. Neurosci.">
        <title>Deletion of a remote enhancer near ATOH7 disrupts retinal neurogenesis, causing NCRNA disease.</title>
        <authorList>
            <person name="Ghiasvand N.M."/>
            <person name="Rudolph D.D."/>
            <person name="Mashayekhi M."/>
            <person name="Brzezinski J.A."/>
            <person name="Goldman D."/>
            <person name="Glaser T."/>
        </authorList>
    </citation>
    <scope>INVOLVEMENT IN PHPVAR</scope>
</reference>
<reference key="5">
    <citation type="journal article" date="2010" name="Hum. Mol. Genet.">
        <title>Genome-wide association identifies ATOH7 as a major gene determining human optic disc size.</title>
        <authorList>
            <person name="Macgregor S."/>
            <person name="Hewitt A.W."/>
            <person name="Hysi P.G."/>
            <person name="Ruddle J.B."/>
            <person name="Medland S.E."/>
            <person name="Henders A.K."/>
            <person name="Gordon S.D."/>
            <person name="Andrew T."/>
            <person name="McEvoy B."/>
            <person name="Sanfilippo P.G."/>
            <person name="Carbonaro F."/>
            <person name="Tah V."/>
            <person name="Li Y.J."/>
            <person name="Bennett S.L."/>
            <person name="Craig J.E."/>
            <person name="Montgomery G.W."/>
            <person name="Tran-Viet K.N."/>
            <person name="Brown N.L."/>
            <person name="Spector T.D."/>
            <person name="Martin N.G."/>
            <person name="Young T.L."/>
            <person name="Hammond C.J."/>
            <person name="Mackey D.A."/>
        </authorList>
    </citation>
    <scope>VARIANTS THR-47 AND GLY-65</scope>
</reference>
<reference key="6">
    <citation type="journal article" date="2012" name="Hum. Mol. Genet.">
        <title>Next generation sequencing identifies mutations in Atonal homolog 7 (ATOH7) in families with global eye developmental defects.</title>
        <authorList>
            <person name="Khan K."/>
            <person name="Logan C.V."/>
            <person name="McKibbin M."/>
            <person name="Sheridan E."/>
            <person name="Elcioglu N.H."/>
            <person name="Yenice O."/>
            <person name="Parry D.A."/>
            <person name="Fernandez-Fuentes N."/>
            <person name="Abdelhamed Z.I."/>
            <person name="Al-Maskari A."/>
            <person name="Poulter J.A."/>
            <person name="Mohamed M.D."/>
            <person name="Carr I.M."/>
            <person name="Morgan J.E."/>
            <person name="Jafri H."/>
            <person name="Raashid Y."/>
            <person name="Taylor G.R."/>
            <person name="Johnson C.A."/>
            <person name="Inglehearn C.F."/>
            <person name="Toomes C."/>
            <person name="Ali M."/>
        </authorList>
    </citation>
    <scope>VARIANT PHPVAR VAL-49</scope>
</reference>
<reference key="7">
    <citation type="journal article" date="2012" name="Hum. Mol. Genet.">
        <title>ATOH7 mutations cause autosomal recessive persistent hyperplasia of the primary vitreous.</title>
        <authorList>
            <person name="Prasov L."/>
            <person name="Masud T."/>
            <person name="Khaliq S."/>
            <person name="Mehdi S.Q."/>
            <person name="Abid A."/>
            <person name="Oliver E.R."/>
            <person name="Silva E.D."/>
            <person name="Lewanda A."/>
            <person name="Brodsky M.C."/>
            <person name="Borchert M."/>
            <person name="Kelberman D."/>
            <person name="Sowden J.C."/>
            <person name="Dattani M.T."/>
            <person name="Glaser T."/>
        </authorList>
    </citation>
    <scope>VARIANT PHPVAR HIS-46</scope>
    <scope>CHARACTERIZATION OF VARIANT PHPVAR HIS-46</scope>
    <scope>VARIANTS THR-47 AND GLY-65</scope>
    <scope>CHARACTERIZATION OF VARIANTS THR-47 AND GLY-65</scope>
    <scope>MUTAGENESIS OF LEU-56</scope>
</reference>
<reference key="8">
    <citation type="journal article" date="2016" name="Ophthalmic Genet.">
        <title>Mutations in ATOH7 gene in patients with nonsyndromic congenital retinal nonattachment and familial exudative vitreoretinopathy.</title>
        <authorList>
            <person name="Kondo H."/>
            <person name="Matsushita I."/>
            <person name="Tahira T."/>
            <person name="Uchio E."/>
            <person name="Kusaka S."/>
        </authorList>
    </citation>
    <scope>VARIANTS PHPVAR 41-ARG--ARG-48 DEL AND 134-GLU--THR-152 DEL</scope>
</reference>
<reference key="9">
    <citation type="journal article" date="2017" name="Invest. Ophthalmol. Vis. Sci.">
        <title>The Genetic Causes of Nonsyndromic Congenital Retinal Detachment: A Genetic and Phenotypic Study of Pakistani Families.</title>
        <authorList>
            <person name="Keser V."/>
            <person name="Khan A."/>
            <person name="Siddiqui S."/>
            <person name="Lopez I."/>
            <person name="Ren H."/>
            <person name="Qamar R."/>
            <person name="Nadaf J."/>
            <person name="Majewski J."/>
            <person name="Chen R."/>
            <person name="Koenekoop R.K."/>
        </authorList>
    </citation>
    <scope>VARIANT PHPVAR PRO-42</scope>
</reference>
<reference key="10">
    <citation type="journal article" date="2020" name="Hum. Mol. Genet.">
        <title>Atonal homolog 7 (ATOH7) loss-of-function mutations in predominant bilateral optic nerve hypoplasia.</title>
        <authorList>
            <person name="Atac D."/>
            <person name="Koller S."/>
            <person name="Hanson J.V.M."/>
            <person name="Feil S."/>
            <person name="Tiwari A."/>
            <person name="Bahr A."/>
            <person name="Baehr L."/>
            <person name="Magyar I."/>
            <person name="Kottke R."/>
            <person name="Gerth-Kahlert C."/>
            <person name="Berger W."/>
        </authorList>
    </citation>
    <scope>VARIANTS VAL-59 AND THR-59</scope>
    <scope>CHARACTERIZATION OF VARIANTS HIS-46; VAL-59 AND THR-59</scope>
    <scope>FUNCTION</scope>
    <scope>INTERACTION WITH TCF3</scope>
    <scope>SUBCELLULAR LOCATION</scope>
    <scope>MUTAGENESIS OF ALA-59</scope>
</reference>
<name>ATOH7_HUMAN</name>
<proteinExistence type="evidence at protein level"/>
<keyword id="KW-0966">Cell projection</keyword>
<keyword id="KW-0217">Developmental protein</keyword>
<keyword id="KW-0221">Differentiation</keyword>
<keyword id="KW-0225">Disease variant</keyword>
<keyword id="KW-0238">DNA-binding</keyword>
<keyword id="KW-0524">Neurogenesis</keyword>
<keyword id="KW-0539">Nucleus</keyword>
<keyword id="KW-1185">Reference proteome</keyword>
<keyword id="KW-0804">Transcription</keyword>
<keyword id="KW-0805">Transcription regulation</keyword>
<comment type="function">
    <text evidence="1 9">Transcription factor that binds to DNA at the consensus sequence 5'-CAG[GC]TG-3' (PubMed:31696227). Dimerization with TCF3 isoform E47 may be required in certain situations (PubMed:31696227). Binds to gene promoters and enhancer elements, and thereby regulates a transcriptional program of retinal ganglion cell (RGC) determinant genes (By similarity). Although the exact mechanism is not certain, retinal transcription regulation by ATOH7 has a role in RGC determination and survival, photoreceptor population development, targeting of RGC axons to the optic nerve and development of the retino-hypothalamic tract (By similarity). Binds to its own promoter and enhancer sequences, suggesting autoregulation of ATOH7 transcription (By similarity). Required for retinal circadian rhythm photoentrainment (By similarity). Plays a role in brainstem auditory signaling and binaural processing (By similarity).</text>
</comment>
<comment type="subunit">
    <text evidence="9">Forms a heterodimer with TCF3 isoform E47; interaction may be required for DNA-binding in certain situations.</text>
</comment>
<comment type="interaction">
    <interactant intactId="EBI-11976887">
        <id>Q8N100</id>
    </interactant>
    <interactant intactId="EBI-13636688">
        <id>P15884-3</id>
        <label>TCF4</label>
    </interactant>
    <organismsDiffer>false</organismsDiffer>
    <experiments>3</experiments>
</comment>
<comment type="subcellular location">
    <subcellularLocation>
        <location evidence="9">Nucleus</location>
    </subcellularLocation>
    <subcellularLocation>
        <location evidence="1">Perikaryon</location>
    </subcellularLocation>
    <subcellularLocation>
        <location evidence="1">Cell projection</location>
        <location evidence="1">Axon</location>
    </subcellularLocation>
</comment>
<comment type="disease" evidence="4 5 6 7 8">
    <disease id="DI-03277">
        <name>Persistent hyperplastic primary vitreous, autosomal recessive</name>
        <acronym>PHPVAR</acronym>
        <description>A developmental eye malformation associated with microphthalmia, cataract, glaucoma, and congenital retinal non-attachment. It is due to failure of the primary vitreous to regress in utero, resulting in the presence of a retrolental fibrovascular membrane with persistence of the posterior portion of the tunica vasculosa lentis and hyaloid artery. Disease manifestations range from a trivial remnant of hyaloid vessels to a dense fibrovascular mass causing lens opacity and retinal detachment.</description>
        <dbReference type="MIM" id="221900"/>
    </disease>
    <text evidence="4">The disease is caused by variants affecting the gene represented in this entry. A 6.5 kb deletion that spans a remote cis regulatory element 20 kb upstream from ATOH7 has been found in PHPVAR patients (PubMed:21441919).</text>
</comment>
<feature type="chain" id="PRO_0000292406" description="Transcription factor ATOH7">
    <location>
        <begin position="1"/>
        <end position="152"/>
    </location>
</feature>
<feature type="domain" description="bHLH" evidence="2">
    <location>
        <begin position="40"/>
        <end position="92"/>
    </location>
</feature>
<feature type="sequence variant" id="VAR_085727" description="In PHPVAR; uncertain significance; dbSNP:rs560230254." evidence="7">
    <location>
        <begin position="41"/>
        <end position="48"/>
    </location>
</feature>
<feature type="sequence variant" id="VAR_085728" description="In PHPVAR; uncertain significance." evidence="8">
    <original>R</original>
    <variation>P</variation>
    <location>
        <position position="42"/>
    </location>
</feature>
<feature type="sequence variant" id="VAR_072398" description="In PHPVAR; loss of function; polypeptide is stable, but does not bind DNA or activate transcription; does not restore retinal ganglion cell development in retinal explants from a mouse Atoh7 null mutant; abolishes heterodimerization with TCF3 E47 isoform; reduces DNA-binding ability and abolishes transcriptional activation; no effect on nuclear localization; dbSNP:rs587777666." evidence="6 9">
    <original>N</original>
    <variation>H</variation>
    <location>
        <position position="46"/>
    </location>
</feature>
<feature type="sequence variant" id="VAR_072399" description="Found in a sporadic case of optic nerve hypoplasia; uncertain significance; does not affect DNA-binding activity but reduces transcription activation." evidence="3 6">
    <original>A</original>
    <variation>T</variation>
    <location>
        <position position="47"/>
    </location>
</feature>
<feature type="sequence variant" id="VAR_072400" description="In PHPVAR; dbSNP:rs587777664." evidence="5">
    <original>E</original>
    <variation>V</variation>
    <location>
        <position position="49"/>
    </location>
</feature>
<feature type="sequence variant" id="VAR_085729" description="Found in patients with bilateral optic nerve hypoplasia; uncertain significance; abolishes heterodimerization with TCF3 E47 isoform; reduces DNA-binding ability and abolishes transcriptional activation; no effect on nuclear localization; dbSNP:rs138274069." evidence="9">
    <original>A</original>
    <variation>T</variation>
    <location>
        <position position="59"/>
    </location>
</feature>
<feature type="sequence variant" id="VAR_085730" description="Found in patients with bilateral optic nerve hypoplasia; uncertain significance; abolishes heterodimerization with TCF3 E47 isoform; reduces DNA-binding ability and abolishes transcriptional activation; no effect on nuclear localization; dbSNP:rs754494518." evidence="9">
    <original>A</original>
    <variation>V</variation>
    <location>
        <position position="59"/>
    </location>
</feature>
<feature type="sequence variant" id="VAR_072401" description="Does not affect DNA-binding activity or transcription activation; dbSNP:rs111699024." evidence="3 6">
    <original>R</original>
    <variation>G</variation>
    <location>
        <position position="65"/>
    </location>
</feature>
<feature type="sequence variant" id="VAR_085731" description="In PHPVAR; uncertain significance." evidence="7">
    <location>
        <begin position="134"/>
        <end position="152"/>
    </location>
</feature>
<feature type="mutagenesis site" description="Loss of DNA-binding activity; loss of ability to restore retinal ganglion cell development in retinal explants from a mouse Atoh7 null mutant." evidence="6">
    <original>L</original>
    <variation>P</variation>
    <location>
        <position position="56"/>
    </location>
</feature>
<feature type="mutagenesis site" description="Abolishes heterodimerization with TCF3 isoform E47; no effect on nuclear localization." evidence="9">
    <original>A</original>
    <variation>G</variation>
    <location>
        <position position="59"/>
    </location>
</feature>
<dbReference type="EMBL" id="AF418922">
    <property type="protein sequence ID" value="AAL11911.1"/>
    <property type="molecule type" value="Genomic_DNA"/>
</dbReference>
<dbReference type="EMBL" id="BC032621">
    <property type="protein sequence ID" value="AAH32621.1"/>
    <property type="molecule type" value="mRNA"/>
</dbReference>
<dbReference type="EMBL" id="BK000277">
    <property type="protein sequence ID" value="DAA01057.1"/>
    <property type="molecule type" value="mRNA"/>
</dbReference>
<dbReference type="CCDS" id="CCDS7276.1"/>
<dbReference type="RefSeq" id="NP_660161.1">
    <property type="nucleotide sequence ID" value="NM_145178.4"/>
</dbReference>
<dbReference type="SMR" id="Q8N100"/>
<dbReference type="BioGRID" id="128637">
    <property type="interactions" value="1"/>
</dbReference>
<dbReference type="FunCoup" id="Q8N100">
    <property type="interactions" value="187"/>
</dbReference>
<dbReference type="IntAct" id="Q8N100">
    <property type="interactions" value="2"/>
</dbReference>
<dbReference type="STRING" id="9606.ENSP00000362777"/>
<dbReference type="iPTMnet" id="Q8N100"/>
<dbReference type="PhosphoSitePlus" id="Q8N100"/>
<dbReference type="BioMuta" id="ATOH7"/>
<dbReference type="DMDM" id="74750873"/>
<dbReference type="MassIVE" id="Q8N100"/>
<dbReference type="PaxDb" id="9606-ENSP00000362777"/>
<dbReference type="Antibodypedia" id="28437">
    <property type="antibodies" value="214 antibodies from 26 providers"/>
</dbReference>
<dbReference type="DNASU" id="220202"/>
<dbReference type="Ensembl" id="ENST00000373673.5">
    <property type="protein sequence ID" value="ENSP00000362777.3"/>
    <property type="gene ID" value="ENSG00000179774.9"/>
</dbReference>
<dbReference type="GeneID" id="220202"/>
<dbReference type="KEGG" id="hsa:220202"/>
<dbReference type="MANE-Select" id="ENST00000373673.5">
    <property type="protein sequence ID" value="ENSP00000362777.3"/>
    <property type="RefSeq nucleotide sequence ID" value="NM_145178.4"/>
    <property type="RefSeq protein sequence ID" value="NP_660161.1"/>
</dbReference>
<dbReference type="UCSC" id="uc001jnq.4">
    <property type="organism name" value="human"/>
</dbReference>
<dbReference type="AGR" id="HGNC:13907"/>
<dbReference type="CTD" id="220202"/>
<dbReference type="DisGeNET" id="220202"/>
<dbReference type="GeneCards" id="ATOH7"/>
<dbReference type="HGNC" id="HGNC:13907">
    <property type="gene designation" value="ATOH7"/>
</dbReference>
<dbReference type="HPA" id="ENSG00000179774">
    <property type="expression patterns" value="Group enriched (brain, kidney, liver)"/>
</dbReference>
<dbReference type="MalaCards" id="ATOH7"/>
<dbReference type="MIM" id="221900">
    <property type="type" value="phenotype"/>
</dbReference>
<dbReference type="MIM" id="609875">
    <property type="type" value="gene"/>
</dbReference>
<dbReference type="neXtProt" id="NX_Q8N100"/>
<dbReference type="OpenTargets" id="ENSG00000179774"/>
<dbReference type="Orphanet" id="289499">
    <property type="disease" value="Congenital cataract microcornea with corneal opacity"/>
</dbReference>
<dbReference type="Orphanet" id="91495">
    <property type="disease" value="Persistent hyperplastic primary vitreous"/>
</dbReference>
<dbReference type="PharmGKB" id="PA38369"/>
<dbReference type="VEuPathDB" id="HostDB:ENSG00000179774"/>
<dbReference type="eggNOG" id="KOG4395">
    <property type="taxonomic scope" value="Eukaryota"/>
</dbReference>
<dbReference type="GeneTree" id="ENSGT00940000161556"/>
<dbReference type="HOGENOM" id="CLU_145503_0_0_1"/>
<dbReference type="InParanoid" id="Q8N100"/>
<dbReference type="OMA" id="WINLHCE"/>
<dbReference type="OrthoDB" id="6161578at2759"/>
<dbReference type="PAN-GO" id="Q8N100">
    <property type="GO annotations" value="5 GO annotations based on evolutionary models"/>
</dbReference>
<dbReference type="PhylomeDB" id="Q8N100"/>
<dbReference type="TreeFam" id="TF315153"/>
<dbReference type="PathwayCommons" id="Q8N100"/>
<dbReference type="SignaLink" id="Q8N100"/>
<dbReference type="SIGNOR" id="Q8N100"/>
<dbReference type="BioGRID-ORCS" id="220202">
    <property type="hits" value="3 hits in 1154 CRISPR screens"/>
</dbReference>
<dbReference type="GenomeRNAi" id="220202"/>
<dbReference type="Pharos" id="Q8N100">
    <property type="development level" value="Tbio"/>
</dbReference>
<dbReference type="PRO" id="PR:Q8N100"/>
<dbReference type="Proteomes" id="UP000005640">
    <property type="component" value="Chromosome 10"/>
</dbReference>
<dbReference type="RNAct" id="Q8N100">
    <property type="molecule type" value="protein"/>
</dbReference>
<dbReference type="Bgee" id="ENSG00000179774">
    <property type="expression patterns" value="Expressed in male germ line stem cell (sensu Vertebrata) in testis and 67 other cell types or tissues"/>
</dbReference>
<dbReference type="ExpressionAtlas" id="Q8N100">
    <property type="expression patterns" value="baseline and differential"/>
</dbReference>
<dbReference type="GO" id="GO:0030424">
    <property type="term" value="C:axon"/>
    <property type="evidence" value="ECO:0000250"/>
    <property type="project" value="UniProtKB"/>
</dbReference>
<dbReference type="GO" id="GO:0000785">
    <property type="term" value="C:chromatin"/>
    <property type="evidence" value="ECO:0000247"/>
    <property type="project" value="NTNU_SB"/>
</dbReference>
<dbReference type="GO" id="GO:0005829">
    <property type="term" value="C:cytosol"/>
    <property type="evidence" value="ECO:0000314"/>
    <property type="project" value="HPA"/>
</dbReference>
<dbReference type="GO" id="GO:0005654">
    <property type="term" value="C:nucleoplasm"/>
    <property type="evidence" value="ECO:0000314"/>
    <property type="project" value="HPA"/>
</dbReference>
<dbReference type="GO" id="GO:0005634">
    <property type="term" value="C:nucleus"/>
    <property type="evidence" value="ECO:0000314"/>
    <property type="project" value="UniProtKB"/>
</dbReference>
<dbReference type="GO" id="GO:0043204">
    <property type="term" value="C:perikaryon"/>
    <property type="evidence" value="ECO:0000250"/>
    <property type="project" value="UniProtKB"/>
</dbReference>
<dbReference type="GO" id="GO:0000981">
    <property type="term" value="F:DNA-binding transcription factor activity, RNA polymerase II-specific"/>
    <property type="evidence" value="ECO:0000247"/>
    <property type="project" value="NTNU_SB"/>
</dbReference>
<dbReference type="GO" id="GO:0070888">
    <property type="term" value="F:E-box binding"/>
    <property type="evidence" value="ECO:0000318"/>
    <property type="project" value="GO_Central"/>
</dbReference>
<dbReference type="GO" id="GO:0046983">
    <property type="term" value="F:protein dimerization activity"/>
    <property type="evidence" value="ECO:0007669"/>
    <property type="project" value="InterPro"/>
</dbReference>
<dbReference type="GO" id="GO:1990837">
    <property type="term" value="F:sequence-specific double-stranded DNA binding"/>
    <property type="evidence" value="ECO:0000314"/>
    <property type="project" value="ARUK-UCL"/>
</dbReference>
<dbReference type="GO" id="GO:0000976">
    <property type="term" value="F:transcription cis-regulatory region binding"/>
    <property type="evidence" value="ECO:0000314"/>
    <property type="project" value="UniProtKB"/>
</dbReference>
<dbReference type="GO" id="GO:0061564">
    <property type="term" value="P:axon development"/>
    <property type="evidence" value="ECO:0000318"/>
    <property type="project" value="GO_Central"/>
</dbReference>
<dbReference type="GO" id="GO:0007623">
    <property type="term" value="P:circadian rhythm"/>
    <property type="evidence" value="ECO:0007669"/>
    <property type="project" value="Ensembl"/>
</dbReference>
<dbReference type="GO" id="GO:0043153">
    <property type="term" value="P:entrainment of circadian clock by photoperiod"/>
    <property type="evidence" value="ECO:0000250"/>
    <property type="project" value="UniProtKB"/>
</dbReference>
<dbReference type="GO" id="GO:0003407">
    <property type="term" value="P:neural retina development"/>
    <property type="evidence" value="ECO:0000315"/>
    <property type="project" value="MGI"/>
</dbReference>
<dbReference type="GO" id="GO:0048663">
    <property type="term" value="P:neuron fate commitment"/>
    <property type="evidence" value="ECO:0000318"/>
    <property type="project" value="GO_Central"/>
</dbReference>
<dbReference type="GO" id="GO:0021554">
    <property type="term" value="P:optic nerve development"/>
    <property type="evidence" value="ECO:0000315"/>
    <property type="project" value="MGI"/>
</dbReference>
<dbReference type="GO" id="GO:1902336">
    <property type="term" value="P:positive regulation of retinal ganglion cell axon guidance"/>
    <property type="evidence" value="ECO:0000250"/>
    <property type="project" value="UniProtKB"/>
</dbReference>
<dbReference type="GO" id="GO:0045944">
    <property type="term" value="P:positive regulation of transcription by RNA polymerase II"/>
    <property type="evidence" value="ECO:0000315"/>
    <property type="project" value="UniProtKB"/>
</dbReference>
<dbReference type="GO" id="GO:0006357">
    <property type="term" value="P:regulation of transcription by RNA polymerase II"/>
    <property type="evidence" value="ECO:0000250"/>
    <property type="project" value="UniProtKB"/>
</dbReference>
<dbReference type="GO" id="GO:0010996">
    <property type="term" value="P:response to auditory stimulus"/>
    <property type="evidence" value="ECO:0000250"/>
    <property type="project" value="UniProtKB"/>
</dbReference>
<dbReference type="GO" id="GO:0007423">
    <property type="term" value="P:sensory organ development"/>
    <property type="evidence" value="ECO:0000318"/>
    <property type="project" value="GO_Central"/>
</dbReference>
<dbReference type="CDD" id="cd19714">
    <property type="entry name" value="bHLH_TS_ATOH7"/>
    <property type="match status" value="1"/>
</dbReference>
<dbReference type="FunFam" id="4.10.280.10:FF:000025">
    <property type="entry name" value="protein atonal homolog 7"/>
    <property type="match status" value="1"/>
</dbReference>
<dbReference type="Gene3D" id="4.10.280.10">
    <property type="entry name" value="Helix-loop-helix DNA-binding domain"/>
    <property type="match status" value="1"/>
</dbReference>
<dbReference type="InterPro" id="IPR032663">
    <property type="entry name" value="ATOH7_bHLH"/>
</dbReference>
<dbReference type="InterPro" id="IPR011598">
    <property type="entry name" value="bHLH_dom"/>
</dbReference>
<dbReference type="InterPro" id="IPR050359">
    <property type="entry name" value="bHLH_transcription_factors"/>
</dbReference>
<dbReference type="InterPro" id="IPR036638">
    <property type="entry name" value="HLH_DNA-bd_sf"/>
</dbReference>
<dbReference type="PANTHER" id="PTHR19290">
    <property type="entry name" value="BASIC HELIX-LOOP-HELIX PROTEIN NEUROGENIN-RELATED"/>
    <property type="match status" value="1"/>
</dbReference>
<dbReference type="PANTHER" id="PTHR19290:SF99">
    <property type="entry name" value="TRANSCRIPTION FACTOR ATOH7"/>
    <property type="match status" value="1"/>
</dbReference>
<dbReference type="Pfam" id="PF00010">
    <property type="entry name" value="HLH"/>
    <property type="match status" value="1"/>
</dbReference>
<dbReference type="SMART" id="SM00353">
    <property type="entry name" value="HLH"/>
    <property type="match status" value="1"/>
</dbReference>
<dbReference type="SUPFAM" id="SSF47459">
    <property type="entry name" value="HLH, helix-loop-helix DNA-binding domain"/>
    <property type="match status" value="1"/>
</dbReference>
<dbReference type="PROSITE" id="PS50888">
    <property type="entry name" value="BHLH"/>
    <property type="match status" value="1"/>
</dbReference>
<evidence type="ECO:0000250" key="1">
    <source>
        <dbReference type="UniProtKB" id="Q9Z2E5"/>
    </source>
</evidence>
<evidence type="ECO:0000255" key="2">
    <source>
        <dbReference type="PROSITE-ProRule" id="PRU00981"/>
    </source>
</evidence>
<evidence type="ECO:0000269" key="3">
    <source>
    </source>
</evidence>
<evidence type="ECO:0000269" key="4">
    <source>
    </source>
</evidence>
<evidence type="ECO:0000269" key="5">
    <source>
    </source>
</evidence>
<evidence type="ECO:0000269" key="6">
    <source>
    </source>
</evidence>
<evidence type="ECO:0000269" key="7">
    <source>
    </source>
</evidence>
<evidence type="ECO:0000269" key="8">
    <source>
    </source>
</evidence>
<evidence type="ECO:0000269" key="9">
    <source>
    </source>
</evidence>
<evidence type="ECO:0000305" key="10"/>
<evidence type="ECO:0000312" key="11">
    <source>
        <dbReference type="HGNC" id="HGNC:13907"/>
    </source>
</evidence>
<organism>
    <name type="scientific">Homo sapiens</name>
    <name type="common">Human</name>
    <dbReference type="NCBI Taxonomy" id="9606"/>
    <lineage>
        <taxon>Eukaryota</taxon>
        <taxon>Metazoa</taxon>
        <taxon>Chordata</taxon>
        <taxon>Craniata</taxon>
        <taxon>Vertebrata</taxon>
        <taxon>Euteleostomi</taxon>
        <taxon>Mammalia</taxon>
        <taxon>Eutheria</taxon>
        <taxon>Euarchontoglires</taxon>
        <taxon>Primates</taxon>
        <taxon>Haplorrhini</taxon>
        <taxon>Catarrhini</taxon>
        <taxon>Hominidae</taxon>
        <taxon>Homo</taxon>
    </lineage>
</organism>
<sequence length="152" mass="16871">MKSCKPSGPPAGARVAPPCAGGTECAGTCAGAGRLESAARRRLAANARERRRMQGLNTAFDRLRRVVPQWGQDKKLSKYETLQMALSYIMALTRILAEAERFGSERDWVGLHCEHFGRDHYLPFPGAKLPGESELYSQRLFGFQPEPFQMAT</sequence>
<accession>Q8N100</accession>
<gene>
    <name evidence="11" type="primary">ATOH7</name>
    <name type="synonym">ATH5</name>
    <name type="synonym">BHLHA13</name>
</gene>